<comment type="subunit">
    <text evidence="2">Interacts with XRN2; the interaction is direct.</text>
</comment>
<comment type="interaction">
    <interactant intactId="EBI-10038935">
        <id>Q96HQ2</id>
    </interactant>
    <interactant intactId="EBI-712648">
        <id>O95994</id>
        <label>AGR2</label>
    </interactant>
    <organismsDiffer>false</organismsDiffer>
    <experiments>3</experiments>
</comment>
<comment type="interaction">
    <interactant intactId="EBI-10038935">
        <id>Q96HQ2</id>
    </interactant>
    <interactant intactId="EBI-1188472">
        <id>P78358</id>
        <label>CTAG1B</label>
    </interactant>
    <organismsDiffer>false</organismsDiffer>
    <experiments>3</experiments>
</comment>
<comment type="interaction">
    <interactant intactId="EBI-10038935">
        <id>Q96HQ2</id>
    </interactant>
    <interactant intactId="EBI-741158">
        <id>Q96HA8</id>
        <label>NTAQ1</label>
    </interactant>
    <organismsDiffer>false</organismsDiffer>
    <experiments>3</experiments>
</comment>
<comment type="interaction">
    <interactant intactId="EBI-10038935">
        <id>Q96HQ2</id>
    </interactant>
    <interactant intactId="EBI-372110">
        <id>Q9H0D6</id>
        <label>XRN2</label>
    </interactant>
    <organismsDiffer>false</organismsDiffer>
    <experiments>4</experiments>
</comment>
<comment type="alternative products">
    <event type="alternative splicing"/>
    <isoform>
        <id>Q96HQ2-1</id>
        <name>1</name>
        <sequence type="displayed"/>
    </isoform>
    <isoform>
        <id>Q96HQ2-2</id>
        <name>2</name>
        <sequence type="described" ref="VSP_032486"/>
    </isoform>
</comment>
<comment type="similarity">
    <text evidence="5">Belongs to the CARF family.</text>
</comment>
<reference key="1">
    <citation type="submission" date="2005-09" db="EMBL/GenBank/DDBJ databases">
        <authorList>
            <person name="Mural R.J."/>
            <person name="Istrail S."/>
            <person name="Sutton G.G."/>
            <person name="Florea L."/>
            <person name="Halpern A.L."/>
            <person name="Mobarry C.M."/>
            <person name="Lippert R."/>
            <person name="Walenz B."/>
            <person name="Shatkay H."/>
            <person name="Dew I."/>
            <person name="Miller J.R."/>
            <person name="Flanigan M.J."/>
            <person name="Edwards N.J."/>
            <person name="Bolanos R."/>
            <person name="Fasulo D."/>
            <person name="Halldorsson B.V."/>
            <person name="Hannenhalli S."/>
            <person name="Turner R."/>
            <person name="Yooseph S."/>
            <person name="Lu F."/>
            <person name="Nusskern D.R."/>
            <person name="Shue B.C."/>
            <person name="Zheng X.H."/>
            <person name="Zhong F."/>
            <person name="Delcher A.L."/>
            <person name="Huson D.H."/>
            <person name="Kravitz S.A."/>
            <person name="Mouchard L."/>
            <person name="Reinert K."/>
            <person name="Remington K.A."/>
            <person name="Clark A.G."/>
            <person name="Waterman M.S."/>
            <person name="Eichler E.E."/>
            <person name="Adams M.D."/>
            <person name="Hunkapiller M.W."/>
            <person name="Myers E.W."/>
            <person name="Venter J.C."/>
        </authorList>
    </citation>
    <scope>NUCLEOTIDE SEQUENCE [LARGE SCALE GENOMIC DNA]</scope>
</reference>
<reference key="2">
    <citation type="journal article" date="2004" name="Genome Res.">
        <title>The status, quality, and expansion of the NIH full-length cDNA project: the Mammalian Gene Collection (MGC).</title>
        <authorList>
            <consortium name="The MGC Project Team"/>
        </authorList>
    </citation>
    <scope>NUCLEOTIDE SEQUENCE [LARGE SCALE MRNA] (ISOFORMS 1 AND 2)</scope>
    <source>
        <tissue>Brain</tissue>
        <tissue>Lung</tissue>
    </source>
</reference>
<reference key="3">
    <citation type="submission" date="2008-12" db="UniProtKB">
        <authorList>
            <person name="Bienvenut W.V."/>
            <person name="Zebisch A."/>
            <person name="Kolch W."/>
        </authorList>
    </citation>
    <scope>PROTEIN SEQUENCE OF 1-28</scope>
    <scope>ACETYLATION AT MET-1</scope>
    <scope>IDENTIFICATION BY MASS SPECTROMETRY</scope>
    <source>
        <tissue>Colon carcinoma</tissue>
    </source>
</reference>
<reference key="4">
    <citation type="journal article" date="2012" name="Proc. Natl. Acad. Sci. U.S.A.">
        <title>N-terminal acetylome analyses and functional insights of the N-terminal acetyltransferase NatB.</title>
        <authorList>
            <person name="Van Damme P."/>
            <person name="Lasa M."/>
            <person name="Polevoda B."/>
            <person name="Gazquez C."/>
            <person name="Elosegui-Artola A."/>
            <person name="Kim D.S."/>
            <person name="De Juan-Pardo E."/>
            <person name="Demeyer K."/>
            <person name="Hole K."/>
            <person name="Larrea E."/>
            <person name="Timmerman E."/>
            <person name="Prieto J."/>
            <person name="Arnesen T."/>
            <person name="Sherman F."/>
            <person name="Gevaert K."/>
            <person name="Aldabe R."/>
        </authorList>
    </citation>
    <scope>ACETYLATION [LARGE SCALE ANALYSIS] AT MET-1</scope>
    <scope>IDENTIFICATION BY MASS SPECTROMETRY [LARGE SCALE ANALYSIS]</scope>
</reference>
<reference key="5">
    <citation type="journal article" date="2016" name="Nat. Struct. Mol. Biol.">
        <title>Structural basis and function of XRN2 binding by XTB domains.</title>
        <authorList>
            <person name="Richter H."/>
            <person name="Katic I."/>
            <person name="Gut H."/>
            <person name="Grosshans H."/>
        </authorList>
    </citation>
    <scope>INTERACTION WITH XRN2</scope>
    <scope>MUTAGENESIS OF TYR-81</scope>
</reference>
<name>C2AIL_HUMAN</name>
<accession>Q96HQ2</accession>
<accession>Q8WVE3</accession>
<organism>
    <name type="scientific">Homo sapiens</name>
    <name type="common">Human</name>
    <dbReference type="NCBI Taxonomy" id="9606"/>
    <lineage>
        <taxon>Eukaryota</taxon>
        <taxon>Metazoa</taxon>
        <taxon>Chordata</taxon>
        <taxon>Craniata</taxon>
        <taxon>Vertebrata</taxon>
        <taxon>Euteleostomi</taxon>
        <taxon>Mammalia</taxon>
        <taxon>Eutheria</taxon>
        <taxon>Euarchontoglires</taxon>
        <taxon>Primates</taxon>
        <taxon>Haplorrhini</taxon>
        <taxon>Catarrhini</taxon>
        <taxon>Hominidae</taxon>
        <taxon>Homo</taxon>
    </lineage>
</organism>
<sequence length="116" mass="13196">MVGGEAAAAVEELVSGVRQAADFAEQFRSYSESEKQWKARMEFILRHLPDYRDPPDGSGRLDQLLSLSMVWANHLFLGCSYNKDLLDKVMEMADGIEVEDLPQFTTRSELMKKHQS</sequence>
<gene>
    <name type="primary">CDKN2AIPNL</name>
</gene>
<keyword id="KW-0007">Acetylation</keyword>
<keyword id="KW-0025">Alternative splicing</keyword>
<keyword id="KW-0903">Direct protein sequencing</keyword>
<keyword id="KW-1267">Proteomics identification</keyword>
<keyword id="KW-1185">Reference proteome</keyword>
<dbReference type="EMBL" id="CH471062">
    <property type="protein sequence ID" value="EAW62260.1"/>
    <property type="molecule type" value="Genomic_DNA"/>
</dbReference>
<dbReference type="EMBL" id="CH471062">
    <property type="protein sequence ID" value="EAW62261.1"/>
    <property type="molecule type" value="Genomic_DNA"/>
</dbReference>
<dbReference type="EMBL" id="BC008293">
    <property type="protein sequence ID" value="AAH08293.1"/>
    <property type="molecule type" value="mRNA"/>
</dbReference>
<dbReference type="EMBL" id="BC018086">
    <property type="protein sequence ID" value="AAH18086.1"/>
    <property type="molecule type" value="mRNA"/>
</dbReference>
<dbReference type="CCDS" id="CCDS4175.1">
    <molecule id="Q96HQ2-1"/>
</dbReference>
<dbReference type="RefSeq" id="NP_542387.1">
    <molecule id="Q96HQ2-1"/>
    <property type="nucleotide sequence ID" value="NM_080656.3"/>
</dbReference>
<dbReference type="SMR" id="Q96HQ2"/>
<dbReference type="BioGRID" id="124820">
    <property type="interactions" value="32"/>
</dbReference>
<dbReference type="DIP" id="DIP-61982N"/>
<dbReference type="FunCoup" id="Q96HQ2">
    <property type="interactions" value="1284"/>
</dbReference>
<dbReference type="IntAct" id="Q96HQ2">
    <property type="interactions" value="19"/>
</dbReference>
<dbReference type="MINT" id="Q96HQ2"/>
<dbReference type="STRING" id="9606.ENSP00000394183"/>
<dbReference type="GlyGen" id="Q96HQ2">
    <property type="glycosylation" value="1 site, 1 O-linked glycan (1 site)"/>
</dbReference>
<dbReference type="iPTMnet" id="Q96HQ2"/>
<dbReference type="MetOSite" id="Q96HQ2"/>
<dbReference type="PhosphoSitePlus" id="Q96HQ2"/>
<dbReference type="BioMuta" id="CDKN2AIPNL"/>
<dbReference type="DMDM" id="74731962"/>
<dbReference type="jPOST" id="Q96HQ2"/>
<dbReference type="MassIVE" id="Q96HQ2"/>
<dbReference type="PaxDb" id="9606-ENSP00000394183"/>
<dbReference type="PeptideAtlas" id="Q96HQ2"/>
<dbReference type="ProteomicsDB" id="76776">
    <molecule id="Q96HQ2-1"/>
</dbReference>
<dbReference type="ProteomicsDB" id="76777">
    <molecule id="Q96HQ2-2"/>
</dbReference>
<dbReference type="Pumba" id="Q96HQ2"/>
<dbReference type="TopDownProteomics" id="Q96HQ2-1">
    <molecule id="Q96HQ2-1"/>
</dbReference>
<dbReference type="Antibodypedia" id="64397">
    <property type="antibodies" value="37 antibodies from 10 providers"/>
</dbReference>
<dbReference type="DNASU" id="91368"/>
<dbReference type="Ensembl" id="ENST00000395009.3">
    <molecule id="Q96HQ2-2"/>
    <property type="protein sequence ID" value="ENSP00000378456.3"/>
    <property type="gene ID" value="ENSG00000237190.4"/>
</dbReference>
<dbReference type="Ensembl" id="ENST00000458198.3">
    <molecule id="Q96HQ2-1"/>
    <property type="protein sequence ID" value="ENSP00000394183.2"/>
    <property type="gene ID" value="ENSG00000237190.4"/>
</dbReference>
<dbReference type="GeneID" id="91368"/>
<dbReference type="KEGG" id="hsa:91368"/>
<dbReference type="MANE-Select" id="ENST00000458198.3">
    <property type="protein sequence ID" value="ENSP00000394183.2"/>
    <property type="RefSeq nucleotide sequence ID" value="NM_080656.3"/>
    <property type="RefSeq protein sequence ID" value="NP_542387.1"/>
</dbReference>
<dbReference type="UCSC" id="uc011cxs.3">
    <molecule id="Q96HQ2-1"/>
    <property type="organism name" value="human"/>
</dbReference>
<dbReference type="AGR" id="HGNC:30545"/>
<dbReference type="CTD" id="91368"/>
<dbReference type="GeneCards" id="CDKN2AIPNL"/>
<dbReference type="HGNC" id="HGNC:30545">
    <property type="gene designation" value="CDKN2AIPNL"/>
</dbReference>
<dbReference type="HPA" id="ENSG00000237190">
    <property type="expression patterns" value="Tissue enhanced (skeletal)"/>
</dbReference>
<dbReference type="neXtProt" id="NX_Q96HQ2"/>
<dbReference type="OpenTargets" id="ENSG00000237190"/>
<dbReference type="PharmGKB" id="PA162382150"/>
<dbReference type="VEuPathDB" id="HostDB:ENSG00000237190"/>
<dbReference type="eggNOG" id="ENOG502S4FT">
    <property type="taxonomic scope" value="Eukaryota"/>
</dbReference>
<dbReference type="GeneTree" id="ENSGT00940000157177"/>
<dbReference type="HOGENOM" id="CLU_148771_0_0_1"/>
<dbReference type="InParanoid" id="Q96HQ2"/>
<dbReference type="OMA" id="SDKHWEA"/>
<dbReference type="OrthoDB" id="2359216at2759"/>
<dbReference type="PAN-GO" id="Q96HQ2">
    <property type="GO annotations" value="2 GO annotations based on evolutionary models"/>
</dbReference>
<dbReference type="PhylomeDB" id="Q96HQ2"/>
<dbReference type="TreeFam" id="TF333807"/>
<dbReference type="PathwayCommons" id="Q96HQ2"/>
<dbReference type="SignaLink" id="Q96HQ2"/>
<dbReference type="BioGRID-ORCS" id="91368">
    <property type="hits" value="46 hits in 1148 CRISPR screens"/>
</dbReference>
<dbReference type="ChiTaRS" id="CDKN2AIPNL">
    <property type="organism name" value="human"/>
</dbReference>
<dbReference type="GenomeRNAi" id="91368"/>
<dbReference type="Pharos" id="Q96HQ2">
    <property type="development level" value="Tdark"/>
</dbReference>
<dbReference type="PRO" id="PR:Q96HQ2"/>
<dbReference type="Proteomes" id="UP000005640">
    <property type="component" value="Chromosome 5"/>
</dbReference>
<dbReference type="RNAct" id="Q96HQ2">
    <property type="molecule type" value="protein"/>
</dbReference>
<dbReference type="Bgee" id="ENSG00000237190">
    <property type="expression patterns" value="Expressed in hindlimb stylopod muscle and 156 other cell types or tissues"/>
</dbReference>
<dbReference type="InterPro" id="IPR021859">
    <property type="entry name" value="XTBD"/>
</dbReference>
<dbReference type="Pfam" id="PF11952">
    <property type="entry name" value="XTBD"/>
    <property type="match status" value="1"/>
</dbReference>
<dbReference type="PROSITE" id="PS51827">
    <property type="entry name" value="XTBD"/>
    <property type="match status" value="1"/>
</dbReference>
<protein>
    <recommendedName>
        <fullName>CDKN2AIP N-terminal-like protein</fullName>
    </recommendedName>
    <alternativeName>
        <fullName>CDKN2A-interacting protein N-terminal-like protein</fullName>
    </alternativeName>
</protein>
<evidence type="ECO:0000255" key="1">
    <source>
        <dbReference type="PROSITE-ProRule" id="PRU01171"/>
    </source>
</evidence>
<evidence type="ECO:0000269" key="2">
    <source>
    </source>
</evidence>
<evidence type="ECO:0000269" key="3">
    <source ref="3"/>
</evidence>
<evidence type="ECO:0000303" key="4">
    <source>
    </source>
</evidence>
<evidence type="ECO:0000305" key="5"/>
<evidence type="ECO:0007744" key="6">
    <source>
    </source>
</evidence>
<feature type="chain" id="PRO_0000325926" description="CDKN2AIP N-terminal-like protein">
    <location>
        <begin position="1"/>
        <end position="116"/>
    </location>
</feature>
<feature type="domain" description="XRN2-binding (XTBD)" evidence="1">
    <location>
        <begin position="24"/>
        <end position="116"/>
    </location>
</feature>
<feature type="modified residue" description="N-acetylmethionine" evidence="3 6">
    <location>
        <position position="1"/>
    </location>
</feature>
<feature type="splice variant" id="VSP_032486" description="In isoform 2." evidence="4">
    <original>YNKDLLDKVMEMADGIEVEDLPQFTTRSELMKKHQS</original>
    <variation>PRGPK</variation>
    <location>
        <begin position="81"/>
        <end position="116"/>
    </location>
</feature>
<feature type="mutagenesis site" description="Abolishes binding to XRN2." evidence="2">
    <original>Y</original>
    <variation>A</variation>
    <location>
        <position position="81"/>
    </location>
</feature>
<proteinExistence type="evidence at protein level"/>